<name>BIOF_VIBCH</name>
<comment type="function">
    <text evidence="1">Catalyzes the decarboxylative condensation of pimeloyl-[acyl-carrier protein] and L-alanine to produce 8-amino-7-oxononanoate (AON), [acyl-carrier protein], and carbon dioxide.</text>
</comment>
<comment type="catalytic activity">
    <reaction evidence="1">
        <text>6-carboxyhexanoyl-[ACP] + L-alanine + H(+) = (8S)-8-amino-7-oxononanoate + holo-[ACP] + CO2</text>
        <dbReference type="Rhea" id="RHEA:42288"/>
        <dbReference type="Rhea" id="RHEA-COMP:9685"/>
        <dbReference type="Rhea" id="RHEA-COMP:9955"/>
        <dbReference type="ChEBI" id="CHEBI:15378"/>
        <dbReference type="ChEBI" id="CHEBI:16526"/>
        <dbReference type="ChEBI" id="CHEBI:57972"/>
        <dbReference type="ChEBI" id="CHEBI:64479"/>
        <dbReference type="ChEBI" id="CHEBI:78846"/>
        <dbReference type="ChEBI" id="CHEBI:149468"/>
        <dbReference type="EC" id="2.3.1.47"/>
    </reaction>
</comment>
<comment type="cofactor">
    <cofactor evidence="1">
        <name>pyridoxal 5'-phosphate</name>
        <dbReference type="ChEBI" id="CHEBI:597326"/>
    </cofactor>
</comment>
<comment type="pathway">
    <text evidence="1">Cofactor biosynthesis; biotin biosynthesis.</text>
</comment>
<comment type="subunit">
    <text evidence="1">Homodimer.</text>
</comment>
<comment type="similarity">
    <text evidence="1">Belongs to the class-II pyridoxal-phosphate-dependent aminotransferase family. BioF subfamily.</text>
</comment>
<sequence length="384" mass="42277">MTLRFKSRIEQALNEREHSRLTRRLQLLDRSAQGELIQQDRTYLNFSSNDYLGLANDAELVQAWQTGLARFGAGSGASPMVTGFSSAHAELEHELCHWLGYERAVLFSSGFSANQALLFTLLEKEDLLLQDKLNHASLMEAGMLSPATMKRFKHNDTEHLRQLLHEQSNSLVVTEGVFSMDGDCAPLAQIATLVKQRAWLMVDDAHGIGVLGEDGAGSCQAAGIHPEILVVTFGKAFGLAGAAVLCDAHVGDYLTQFARHHVYSTAMPPAQAHALTHAARMIQSQSWRREQLAELLACFDEQCRNIPGFVATQTPIKPWLLGSSDSALSASHELKQQGIWVSAIRPPTVPVGSARLRITITAAHTQAQIRRLSEQLKHVMEKDT</sequence>
<feature type="chain" id="PRO_0000381132" description="8-amino-7-oxononanoate synthase">
    <location>
        <begin position="1"/>
        <end position="384"/>
    </location>
</feature>
<feature type="binding site" evidence="1">
    <location>
        <position position="23"/>
    </location>
    <ligand>
        <name>substrate</name>
    </ligand>
</feature>
<feature type="binding site" evidence="1">
    <location>
        <begin position="110"/>
        <end position="111"/>
    </location>
    <ligand>
        <name>pyridoxal 5'-phosphate</name>
        <dbReference type="ChEBI" id="CHEBI:597326"/>
    </ligand>
</feature>
<feature type="binding site" evidence="1">
    <location>
        <position position="135"/>
    </location>
    <ligand>
        <name>substrate</name>
    </ligand>
</feature>
<feature type="binding site" evidence="1">
    <location>
        <position position="179"/>
    </location>
    <ligand>
        <name>pyridoxal 5'-phosphate</name>
        <dbReference type="ChEBI" id="CHEBI:597326"/>
    </ligand>
</feature>
<feature type="binding site" evidence="1">
    <location>
        <position position="206"/>
    </location>
    <ligand>
        <name>pyridoxal 5'-phosphate</name>
        <dbReference type="ChEBI" id="CHEBI:597326"/>
    </ligand>
</feature>
<feature type="binding site" evidence="1">
    <location>
        <position position="232"/>
    </location>
    <ligand>
        <name>pyridoxal 5'-phosphate</name>
        <dbReference type="ChEBI" id="CHEBI:597326"/>
    </ligand>
</feature>
<feature type="binding site" evidence="1">
    <location>
        <position position="348"/>
    </location>
    <ligand>
        <name>substrate</name>
    </ligand>
</feature>
<feature type="modified residue" description="N6-(pyridoxal phosphate)lysine" evidence="1">
    <location>
        <position position="235"/>
    </location>
</feature>
<evidence type="ECO:0000255" key="1">
    <source>
        <dbReference type="HAMAP-Rule" id="MF_01693"/>
    </source>
</evidence>
<keyword id="KW-0093">Biotin biosynthesis</keyword>
<keyword id="KW-0663">Pyridoxal phosphate</keyword>
<keyword id="KW-1185">Reference proteome</keyword>
<keyword id="KW-0808">Transferase</keyword>
<reference key="1">
    <citation type="journal article" date="2000" name="Nature">
        <title>DNA sequence of both chromosomes of the cholera pathogen Vibrio cholerae.</title>
        <authorList>
            <person name="Heidelberg J.F."/>
            <person name="Eisen J.A."/>
            <person name="Nelson W.C."/>
            <person name="Clayton R.A."/>
            <person name="Gwinn M.L."/>
            <person name="Dodson R.J."/>
            <person name="Haft D.H."/>
            <person name="Hickey E.K."/>
            <person name="Peterson J.D."/>
            <person name="Umayam L.A."/>
            <person name="Gill S.R."/>
            <person name="Nelson K.E."/>
            <person name="Read T.D."/>
            <person name="Tettelin H."/>
            <person name="Richardson D.L."/>
            <person name="Ermolaeva M.D."/>
            <person name="Vamathevan J.J."/>
            <person name="Bass S."/>
            <person name="Qin H."/>
            <person name="Dragoi I."/>
            <person name="Sellers P."/>
            <person name="McDonald L.A."/>
            <person name="Utterback T.R."/>
            <person name="Fleischmann R.D."/>
            <person name="Nierman W.C."/>
            <person name="White O."/>
            <person name="Salzberg S.L."/>
            <person name="Smith H.O."/>
            <person name="Colwell R.R."/>
            <person name="Mekalanos J.J."/>
            <person name="Venter J.C."/>
            <person name="Fraser C.M."/>
        </authorList>
    </citation>
    <scope>NUCLEOTIDE SEQUENCE [LARGE SCALE GENOMIC DNA]</scope>
    <source>
        <strain>ATCC 39315 / El Tor Inaba N16961</strain>
    </source>
</reference>
<dbReference type="EC" id="2.3.1.47" evidence="1"/>
<dbReference type="EMBL" id="AE003852">
    <property type="protein sequence ID" value="AAF94272.1"/>
    <property type="molecule type" value="Genomic_DNA"/>
</dbReference>
<dbReference type="PIR" id="A82239">
    <property type="entry name" value="A82239"/>
</dbReference>
<dbReference type="RefSeq" id="NP_230758.1">
    <property type="nucleotide sequence ID" value="NC_002505.1"/>
</dbReference>
<dbReference type="RefSeq" id="WP_000175226.1">
    <property type="nucleotide sequence ID" value="NC_002505.1"/>
</dbReference>
<dbReference type="SMR" id="Q9KSZ3"/>
<dbReference type="STRING" id="243277.VC_1113"/>
<dbReference type="DNASU" id="2614383"/>
<dbReference type="EnsemblBacteria" id="AAF94272">
    <property type="protein sequence ID" value="AAF94272"/>
    <property type="gene ID" value="VC_1113"/>
</dbReference>
<dbReference type="KEGG" id="vch:VC_1113"/>
<dbReference type="PATRIC" id="fig|243277.26.peg.1062"/>
<dbReference type="eggNOG" id="COG0156">
    <property type="taxonomic scope" value="Bacteria"/>
</dbReference>
<dbReference type="HOGENOM" id="CLU_015846_11_2_6"/>
<dbReference type="UniPathway" id="UPA00078"/>
<dbReference type="Proteomes" id="UP000000584">
    <property type="component" value="Chromosome 1"/>
</dbReference>
<dbReference type="GO" id="GO:0008710">
    <property type="term" value="F:8-amino-7-oxononanoate synthase activity"/>
    <property type="evidence" value="ECO:0000318"/>
    <property type="project" value="GO_Central"/>
</dbReference>
<dbReference type="GO" id="GO:0030170">
    <property type="term" value="F:pyridoxal phosphate binding"/>
    <property type="evidence" value="ECO:0007669"/>
    <property type="project" value="UniProtKB-UniRule"/>
</dbReference>
<dbReference type="GO" id="GO:0009102">
    <property type="term" value="P:biotin biosynthetic process"/>
    <property type="evidence" value="ECO:0000318"/>
    <property type="project" value="GO_Central"/>
</dbReference>
<dbReference type="CDD" id="cd06454">
    <property type="entry name" value="KBL_like"/>
    <property type="match status" value="1"/>
</dbReference>
<dbReference type="Gene3D" id="3.90.1150.10">
    <property type="entry name" value="Aspartate Aminotransferase, domain 1"/>
    <property type="match status" value="1"/>
</dbReference>
<dbReference type="Gene3D" id="3.40.640.10">
    <property type="entry name" value="Type I PLP-dependent aspartate aminotransferase-like (Major domain)"/>
    <property type="match status" value="1"/>
</dbReference>
<dbReference type="HAMAP" id="MF_01693">
    <property type="entry name" value="BioF_aminotrans_2"/>
    <property type="match status" value="1"/>
</dbReference>
<dbReference type="InterPro" id="IPR001917">
    <property type="entry name" value="Aminotrans_II_pyridoxalP_BS"/>
</dbReference>
<dbReference type="InterPro" id="IPR004839">
    <property type="entry name" value="Aminotransferase_I/II_large"/>
</dbReference>
<dbReference type="InterPro" id="IPR050087">
    <property type="entry name" value="AON_synthase_class-II"/>
</dbReference>
<dbReference type="InterPro" id="IPR004723">
    <property type="entry name" value="AONS_Archaea/Proteobacteria"/>
</dbReference>
<dbReference type="InterPro" id="IPR022834">
    <property type="entry name" value="AONS_Proteobacteria"/>
</dbReference>
<dbReference type="InterPro" id="IPR015424">
    <property type="entry name" value="PyrdxlP-dep_Trfase"/>
</dbReference>
<dbReference type="InterPro" id="IPR015421">
    <property type="entry name" value="PyrdxlP-dep_Trfase_major"/>
</dbReference>
<dbReference type="InterPro" id="IPR015422">
    <property type="entry name" value="PyrdxlP-dep_Trfase_small"/>
</dbReference>
<dbReference type="NCBIfam" id="TIGR00858">
    <property type="entry name" value="bioF"/>
    <property type="match status" value="1"/>
</dbReference>
<dbReference type="PANTHER" id="PTHR13693:SF100">
    <property type="entry name" value="8-AMINO-7-OXONONANOATE SYNTHASE"/>
    <property type="match status" value="1"/>
</dbReference>
<dbReference type="PANTHER" id="PTHR13693">
    <property type="entry name" value="CLASS II AMINOTRANSFERASE/8-AMINO-7-OXONONANOATE SYNTHASE"/>
    <property type="match status" value="1"/>
</dbReference>
<dbReference type="Pfam" id="PF00155">
    <property type="entry name" value="Aminotran_1_2"/>
    <property type="match status" value="1"/>
</dbReference>
<dbReference type="SUPFAM" id="SSF53383">
    <property type="entry name" value="PLP-dependent transferases"/>
    <property type="match status" value="1"/>
</dbReference>
<dbReference type="PROSITE" id="PS00599">
    <property type="entry name" value="AA_TRANSFER_CLASS_2"/>
    <property type="match status" value="1"/>
</dbReference>
<accession>Q9KSZ3</accession>
<protein>
    <recommendedName>
        <fullName evidence="1">8-amino-7-oxononanoate synthase</fullName>
        <shortName evidence="1">AONS</shortName>
        <ecNumber evidence="1">2.3.1.47</ecNumber>
    </recommendedName>
    <alternativeName>
        <fullName evidence="1">7-keto-8-amino-pelargonic acid synthase</fullName>
        <shortName evidence="1">7-KAP synthase</shortName>
        <shortName evidence="1">KAPA synthase</shortName>
    </alternativeName>
    <alternativeName>
        <fullName evidence="1">8-amino-7-ketopelargonate synthase</fullName>
    </alternativeName>
</protein>
<proteinExistence type="inferred from homology"/>
<gene>
    <name evidence="1" type="primary">bioF</name>
    <name type="ordered locus">VC_1113</name>
</gene>
<organism>
    <name type="scientific">Vibrio cholerae serotype O1 (strain ATCC 39315 / El Tor Inaba N16961)</name>
    <dbReference type="NCBI Taxonomy" id="243277"/>
    <lineage>
        <taxon>Bacteria</taxon>
        <taxon>Pseudomonadati</taxon>
        <taxon>Pseudomonadota</taxon>
        <taxon>Gammaproteobacteria</taxon>
        <taxon>Vibrionales</taxon>
        <taxon>Vibrionaceae</taxon>
        <taxon>Vibrio</taxon>
    </lineage>
</organism>